<protein>
    <recommendedName>
        <fullName evidence="1">Mitochondrial distribution and morphology protein 12</fullName>
    </recommendedName>
    <alternativeName>
        <fullName evidence="1">Mitochondrial inheritance component MDM12</fullName>
    </alternativeName>
</protein>
<comment type="function">
    <text evidence="1">Component of the ERMES/MDM complex, which serves as a molecular tether to connect the endoplasmic reticulum (ER) and mitochondria. Components of this complex are involved in the control of mitochondrial shape and protein biogenesis, and function in nonvesicular lipid trafficking between the ER and mitochondria. MDM12 is required for the interaction of the ER-resident membrane protein MMM1 and the outer mitochondrial membrane-resident beta-barrel protein MDM10. The MDM12-MMM1 subcomplex functions in the major beta-barrel assembly pathway that is responsible for biogenesis of all mitochondrial outer membrane beta-barrel proteins, and acts in a late step after the SAM complex. The MDM10-MDM12-MMM1 subcomplex further acts in the TOM40-specific pathway after the action of the MDM12-MMM1 complex. Essential for establishing and maintaining the structure of mitochondria and maintenance of mtDNA nucleoids.</text>
</comment>
<comment type="subunit">
    <text evidence="1">Component of the ER-mitochondria encounter structure (ERMES) or MDM complex, composed of MMM1, MDM10, MDM12 and MDM34. A MMM1 homodimer associates with one molecule of MDM12 on each side in a pairwise head-to-tail manner, and the SMP-LTD domains of MMM1 and MDM12 generate a continuous hydrophobic tunnel for phospholipid trafficking.</text>
</comment>
<comment type="subcellular location">
    <subcellularLocation>
        <location evidence="1">Mitochondrion outer membrane</location>
        <topology evidence="1">Peripheral membrane protein</topology>
        <orientation evidence="1">Cytoplasmic side</orientation>
    </subcellularLocation>
    <subcellularLocation>
        <location evidence="1">Endoplasmic reticulum membrane</location>
        <topology evidence="1">Peripheral membrane protein</topology>
        <orientation evidence="1">Cytoplasmic side</orientation>
    </subcellularLocation>
    <text evidence="1">The ERMES/MDM complex localizes to a few discrete foci (around 10 per single cell), that represent mitochondria-endoplasmic reticulum junctions. These foci are often found next to mtDNA nucleoids.</text>
</comment>
<comment type="domain">
    <text evidence="1">The SMP-LTD domain is a barrel-like domain that can bind various types of glycerophospholipids in its interior and mediate their transfer between two adjacent bilayers.</text>
</comment>
<comment type="similarity">
    <text evidence="1">Belongs to the MDM12 family.</text>
</comment>
<gene>
    <name evidence="1" type="primary">MDM12</name>
    <name type="ORF">Kpol_1023p25</name>
</gene>
<organism>
    <name type="scientific">Vanderwaltozyma polyspora (strain ATCC 22028 / DSM 70294 / BCRC 21397 / CBS 2163 / NBRC 10782 / NRRL Y-8283 / UCD 57-17)</name>
    <name type="common">Kluyveromyces polysporus</name>
    <dbReference type="NCBI Taxonomy" id="436907"/>
    <lineage>
        <taxon>Eukaryota</taxon>
        <taxon>Fungi</taxon>
        <taxon>Dikarya</taxon>
        <taxon>Ascomycota</taxon>
        <taxon>Saccharomycotina</taxon>
        <taxon>Saccharomycetes</taxon>
        <taxon>Saccharomycetales</taxon>
        <taxon>Saccharomycetaceae</taxon>
        <taxon>Vanderwaltozyma</taxon>
    </lineage>
</organism>
<keyword id="KW-0256">Endoplasmic reticulum</keyword>
<keyword id="KW-0445">Lipid transport</keyword>
<keyword id="KW-0446">Lipid-binding</keyword>
<keyword id="KW-0472">Membrane</keyword>
<keyword id="KW-0496">Mitochondrion</keyword>
<keyword id="KW-1000">Mitochondrion outer membrane</keyword>
<keyword id="KW-1185">Reference proteome</keyword>
<keyword id="KW-0813">Transport</keyword>
<proteinExistence type="inferred from homology"/>
<accession>A7TFP8</accession>
<reference key="1">
    <citation type="journal article" date="2007" name="Proc. Natl. Acad. Sci. U.S.A.">
        <title>Independent sorting-out of thousands of duplicated gene pairs in two yeast species descended from a whole-genome duplication.</title>
        <authorList>
            <person name="Scannell D.R."/>
            <person name="Frank A.C."/>
            <person name="Conant G.C."/>
            <person name="Byrne K.P."/>
            <person name="Woolfit M."/>
            <person name="Wolfe K.H."/>
        </authorList>
    </citation>
    <scope>NUCLEOTIDE SEQUENCE [LARGE SCALE GENOMIC DNA]</scope>
    <source>
        <strain>ATCC 22028 / DSM 70294 / BCRC 21397 / CBS 2163 / NBRC 10782 / NRRL Y-8283 / UCD 57-17</strain>
    </source>
</reference>
<evidence type="ECO:0000255" key="1">
    <source>
        <dbReference type="HAMAP-Rule" id="MF_03104"/>
    </source>
</evidence>
<evidence type="ECO:0000256" key="2">
    <source>
        <dbReference type="SAM" id="MobiDB-lite"/>
    </source>
</evidence>
<name>MDM12_VANPO</name>
<dbReference type="EMBL" id="DS480384">
    <property type="protein sequence ID" value="EDO18856.1"/>
    <property type="molecule type" value="Genomic_DNA"/>
</dbReference>
<dbReference type="RefSeq" id="XP_001646714.1">
    <property type="nucleotide sequence ID" value="XM_001646664.1"/>
</dbReference>
<dbReference type="SMR" id="A7TFP8"/>
<dbReference type="FunCoup" id="A7TFP8">
    <property type="interactions" value="78"/>
</dbReference>
<dbReference type="STRING" id="436907.A7TFP8"/>
<dbReference type="GeneID" id="5547172"/>
<dbReference type="KEGG" id="vpo:Kpol_1023p25"/>
<dbReference type="eggNOG" id="ENOG502QQS2">
    <property type="taxonomic scope" value="Eukaryota"/>
</dbReference>
<dbReference type="HOGENOM" id="CLU_026794_2_0_1"/>
<dbReference type="InParanoid" id="A7TFP8"/>
<dbReference type="OMA" id="AAWPSWI"/>
<dbReference type="OrthoDB" id="3356905at2759"/>
<dbReference type="PhylomeDB" id="A7TFP8"/>
<dbReference type="Proteomes" id="UP000000267">
    <property type="component" value="Unassembled WGS sequence"/>
</dbReference>
<dbReference type="GO" id="GO:0005789">
    <property type="term" value="C:endoplasmic reticulum membrane"/>
    <property type="evidence" value="ECO:0007669"/>
    <property type="project" value="UniProtKB-SubCell"/>
</dbReference>
<dbReference type="GO" id="GO:0032865">
    <property type="term" value="C:ERMES complex"/>
    <property type="evidence" value="ECO:0007669"/>
    <property type="project" value="UniProtKB-UniRule"/>
</dbReference>
<dbReference type="GO" id="GO:0008289">
    <property type="term" value="F:lipid binding"/>
    <property type="evidence" value="ECO:0007669"/>
    <property type="project" value="UniProtKB-KW"/>
</dbReference>
<dbReference type="GO" id="GO:0120013">
    <property type="term" value="F:lipid transfer activity"/>
    <property type="evidence" value="ECO:0007669"/>
    <property type="project" value="EnsemblFungi"/>
</dbReference>
<dbReference type="GO" id="GO:0015917">
    <property type="term" value="P:aminophospholipid transport"/>
    <property type="evidence" value="ECO:0007669"/>
    <property type="project" value="EnsemblFungi"/>
</dbReference>
<dbReference type="GO" id="GO:0000002">
    <property type="term" value="P:mitochondrial genome maintenance"/>
    <property type="evidence" value="ECO:0007669"/>
    <property type="project" value="UniProtKB-UniRule"/>
</dbReference>
<dbReference type="GO" id="GO:0070096">
    <property type="term" value="P:mitochondrial outer membrane translocase complex assembly"/>
    <property type="evidence" value="ECO:0007669"/>
    <property type="project" value="EnsemblFungi"/>
</dbReference>
<dbReference type="GO" id="GO:0000001">
    <property type="term" value="P:mitochondrion inheritance"/>
    <property type="evidence" value="ECO:0007669"/>
    <property type="project" value="EnsemblFungi"/>
</dbReference>
<dbReference type="GO" id="GO:1990456">
    <property type="term" value="P:mitochondrion-endoplasmic reticulum membrane tethering"/>
    <property type="evidence" value="ECO:0007669"/>
    <property type="project" value="EnsemblFungi"/>
</dbReference>
<dbReference type="GO" id="GO:0007031">
    <property type="term" value="P:peroxisome organization"/>
    <property type="evidence" value="ECO:0007669"/>
    <property type="project" value="EnsemblFungi"/>
</dbReference>
<dbReference type="GO" id="GO:0045040">
    <property type="term" value="P:protein insertion into mitochondrial outer membrane"/>
    <property type="evidence" value="ECO:0007669"/>
    <property type="project" value="UniProtKB-UniRule"/>
</dbReference>
<dbReference type="CDD" id="cd21672">
    <property type="entry name" value="SMP_Mdm12"/>
    <property type="match status" value="1"/>
</dbReference>
<dbReference type="HAMAP" id="MF_03104">
    <property type="entry name" value="Mdm12"/>
    <property type="match status" value="1"/>
</dbReference>
<dbReference type="InterPro" id="IPR027532">
    <property type="entry name" value="Mdm12"/>
</dbReference>
<dbReference type="InterPro" id="IPR019411">
    <property type="entry name" value="MMM1_dom"/>
</dbReference>
<dbReference type="InterPro" id="IPR031468">
    <property type="entry name" value="SMP_LBD"/>
</dbReference>
<dbReference type="PANTHER" id="PTHR28204">
    <property type="entry name" value="MITOCHONDRIAL DISTRIBUTION AND MORPHOLOGY PROTEIN 12"/>
    <property type="match status" value="1"/>
</dbReference>
<dbReference type="PANTHER" id="PTHR28204:SF1">
    <property type="entry name" value="MITOCHONDRIAL DISTRIBUTION AND MORPHOLOGY PROTEIN 12"/>
    <property type="match status" value="1"/>
</dbReference>
<dbReference type="Pfam" id="PF10296">
    <property type="entry name" value="MMM1"/>
    <property type="match status" value="1"/>
</dbReference>
<dbReference type="PROSITE" id="PS51847">
    <property type="entry name" value="SMP"/>
    <property type="match status" value="1"/>
</dbReference>
<feature type="chain" id="PRO_0000384317" description="Mitochondrial distribution and morphology protein 12">
    <location>
        <begin position="1"/>
        <end position="273"/>
    </location>
</feature>
<feature type="domain" description="SMP-LTD" evidence="1">
    <location>
        <begin position="1"/>
        <end position="260"/>
    </location>
</feature>
<feature type="region of interest" description="Disordered" evidence="2">
    <location>
        <begin position="76"/>
        <end position="98"/>
    </location>
</feature>
<feature type="compositionally biased region" description="Acidic residues" evidence="2">
    <location>
        <begin position="78"/>
        <end position="90"/>
    </location>
</feature>
<sequence length="273" mass="31187">MSFDINWEQLRNDSNLNRTVTEKLNGYLTSINLPSYVNNLRIERFSMGDRPPKVTLRQITDPVQDFYDAINEELQMSAEEETEGSDDEGYGGDRVRNRGIDTQTVFPSANDVQFLVEMEYNGNMSITVTAEMVLNYPSKKFMALPIRLTISNIGFHTLCLIAFLSKQLFFSFLCDVTDPILDEDDSILDQNGPLLSSKGPLERISIIRSLSISTEVGEEYQGDGSVLKSVGKLEQFLKEKLKDFLRKEVAWPSWINFDFYEPEDNESDDNQIN</sequence>